<sequence length="373" mass="41006">MLYWLFDSWLSQFYSPFSAVSSVTLRTLLTVITSLAFSIILGPRTIAYLRSVKYDQAVRDDGPKTHLAKTGTPTMGGVLILTSIGFSTLCWANLANPYVWILMVVMVIFGAVGWADDWLKIKYKNPKGLIARKKYFWLSVGALFVGSSLYYIASQQPDPAQTKAMVDLLIPLFKNWIVPLSALPLGLGFIIFTYFVINGSSNAVNLTDGLDGLAILPVVFVAAGLGVFSYVSGDVRFADYLHVPYIAYNSEVTIVCAAMIGSGLGFLWYNAHPAQVFMGDVGALALGAMLGTIAVMTRQEIAFAIMGGLFVAEALSVILQVGSFKLRKKRVLLMAPLHHHFEELGWKETQVVVRFWIIAILLVVLGLMTLKLR</sequence>
<dbReference type="EC" id="2.7.8.13" evidence="1"/>
<dbReference type="EMBL" id="CP000713">
    <property type="protein sequence ID" value="ABQ93097.1"/>
    <property type="molecule type" value="Genomic_DNA"/>
</dbReference>
<dbReference type="SMR" id="A5WBQ6"/>
<dbReference type="STRING" id="349106.PsycPRwf_0137"/>
<dbReference type="KEGG" id="prw:PsycPRwf_0137"/>
<dbReference type="eggNOG" id="COG0472">
    <property type="taxonomic scope" value="Bacteria"/>
</dbReference>
<dbReference type="HOGENOM" id="CLU_023982_0_0_6"/>
<dbReference type="UniPathway" id="UPA00219"/>
<dbReference type="GO" id="GO:0005886">
    <property type="term" value="C:plasma membrane"/>
    <property type="evidence" value="ECO:0007669"/>
    <property type="project" value="UniProtKB-SubCell"/>
</dbReference>
<dbReference type="GO" id="GO:0046872">
    <property type="term" value="F:metal ion binding"/>
    <property type="evidence" value="ECO:0007669"/>
    <property type="project" value="UniProtKB-KW"/>
</dbReference>
<dbReference type="GO" id="GO:0008963">
    <property type="term" value="F:phospho-N-acetylmuramoyl-pentapeptide-transferase activity"/>
    <property type="evidence" value="ECO:0007669"/>
    <property type="project" value="UniProtKB-UniRule"/>
</dbReference>
<dbReference type="GO" id="GO:0051992">
    <property type="term" value="F:UDP-N-acetylmuramoyl-L-alanyl-D-glutamyl-meso-2,6-diaminopimelyl-D-alanyl-D-alanine:undecaprenyl-phosphate transferase activity"/>
    <property type="evidence" value="ECO:0007669"/>
    <property type="project" value="RHEA"/>
</dbReference>
<dbReference type="GO" id="GO:0051301">
    <property type="term" value="P:cell division"/>
    <property type="evidence" value="ECO:0007669"/>
    <property type="project" value="UniProtKB-KW"/>
</dbReference>
<dbReference type="GO" id="GO:0071555">
    <property type="term" value="P:cell wall organization"/>
    <property type="evidence" value="ECO:0007669"/>
    <property type="project" value="UniProtKB-KW"/>
</dbReference>
<dbReference type="GO" id="GO:0009252">
    <property type="term" value="P:peptidoglycan biosynthetic process"/>
    <property type="evidence" value="ECO:0007669"/>
    <property type="project" value="UniProtKB-UniRule"/>
</dbReference>
<dbReference type="GO" id="GO:0008360">
    <property type="term" value="P:regulation of cell shape"/>
    <property type="evidence" value="ECO:0007669"/>
    <property type="project" value="UniProtKB-KW"/>
</dbReference>
<dbReference type="CDD" id="cd06852">
    <property type="entry name" value="GT_MraY"/>
    <property type="match status" value="1"/>
</dbReference>
<dbReference type="HAMAP" id="MF_00038">
    <property type="entry name" value="MraY"/>
    <property type="match status" value="1"/>
</dbReference>
<dbReference type="InterPro" id="IPR000715">
    <property type="entry name" value="Glycosyl_transferase_4"/>
</dbReference>
<dbReference type="InterPro" id="IPR003524">
    <property type="entry name" value="PNAcMuramoyl-5peptid_Trfase"/>
</dbReference>
<dbReference type="InterPro" id="IPR018480">
    <property type="entry name" value="PNAcMuramoyl-5peptid_Trfase_CS"/>
</dbReference>
<dbReference type="NCBIfam" id="TIGR00445">
    <property type="entry name" value="mraY"/>
    <property type="match status" value="1"/>
</dbReference>
<dbReference type="PANTHER" id="PTHR22926">
    <property type="entry name" value="PHOSPHO-N-ACETYLMURAMOYL-PENTAPEPTIDE-TRANSFERASE"/>
    <property type="match status" value="1"/>
</dbReference>
<dbReference type="PANTHER" id="PTHR22926:SF5">
    <property type="entry name" value="PHOSPHO-N-ACETYLMURAMOYL-PENTAPEPTIDE-TRANSFERASE HOMOLOG"/>
    <property type="match status" value="1"/>
</dbReference>
<dbReference type="Pfam" id="PF00953">
    <property type="entry name" value="Glycos_transf_4"/>
    <property type="match status" value="1"/>
</dbReference>
<dbReference type="Pfam" id="PF10555">
    <property type="entry name" value="MraY_sig1"/>
    <property type="match status" value="1"/>
</dbReference>
<dbReference type="PROSITE" id="PS01347">
    <property type="entry name" value="MRAY_1"/>
    <property type="match status" value="1"/>
</dbReference>
<dbReference type="PROSITE" id="PS01348">
    <property type="entry name" value="MRAY_2"/>
    <property type="match status" value="1"/>
</dbReference>
<organism>
    <name type="scientific">Psychrobacter sp. (strain PRwf-1)</name>
    <dbReference type="NCBI Taxonomy" id="349106"/>
    <lineage>
        <taxon>Bacteria</taxon>
        <taxon>Pseudomonadati</taxon>
        <taxon>Pseudomonadota</taxon>
        <taxon>Gammaproteobacteria</taxon>
        <taxon>Moraxellales</taxon>
        <taxon>Moraxellaceae</taxon>
        <taxon>Psychrobacter</taxon>
    </lineage>
</organism>
<accession>A5WBQ6</accession>
<proteinExistence type="inferred from homology"/>
<name>MRAY_PSYWF</name>
<protein>
    <recommendedName>
        <fullName evidence="1">Phospho-N-acetylmuramoyl-pentapeptide-transferase</fullName>
        <ecNumber evidence="1">2.7.8.13</ecNumber>
    </recommendedName>
    <alternativeName>
        <fullName evidence="1">UDP-MurNAc-pentapeptide phosphotransferase</fullName>
    </alternativeName>
</protein>
<feature type="chain" id="PRO_1000071052" description="Phospho-N-acetylmuramoyl-pentapeptide-transferase">
    <location>
        <begin position="1"/>
        <end position="373"/>
    </location>
</feature>
<feature type="transmembrane region" description="Helical" evidence="1">
    <location>
        <begin position="28"/>
        <end position="48"/>
    </location>
</feature>
<feature type="transmembrane region" description="Helical" evidence="1">
    <location>
        <begin position="72"/>
        <end position="92"/>
    </location>
</feature>
<feature type="transmembrane region" description="Helical" evidence="1">
    <location>
        <begin position="94"/>
        <end position="114"/>
    </location>
</feature>
<feature type="transmembrane region" description="Helical" evidence="1">
    <location>
        <begin position="135"/>
        <end position="155"/>
    </location>
</feature>
<feature type="transmembrane region" description="Helical" evidence="1">
    <location>
        <begin position="177"/>
        <end position="197"/>
    </location>
</feature>
<feature type="transmembrane region" description="Helical" evidence="1">
    <location>
        <begin position="212"/>
        <end position="232"/>
    </location>
</feature>
<feature type="transmembrane region" description="Helical" evidence="1">
    <location>
        <begin position="252"/>
        <end position="272"/>
    </location>
</feature>
<feature type="transmembrane region" description="Helical" evidence="1">
    <location>
        <begin position="276"/>
        <end position="296"/>
    </location>
</feature>
<feature type="transmembrane region" description="Helical" evidence="1">
    <location>
        <begin position="301"/>
        <end position="321"/>
    </location>
</feature>
<feature type="transmembrane region" description="Helical" evidence="1">
    <location>
        <begin position="350"/>
        <end position="370"/>
    </location>
</feature>
<comment type="function">
    <text evidence="1">Catalyzes the initial step of the lipid cycle reactions in the biosynthesis of the cell wall peptidoglycan: transfers peptidoglycan precursor phospho-MurNAc-pentapeptide from UDP-MurNAc-pentapeptide onto the lipid carrier undecaprenyl phosphate, yielding undecaprenyl-pyrophosphoryl-MurNAc-pentapeptide, known as lipid I.</text>
</comment>
<comment type="catalytic activity">
    <reaction evidence="1">
        <text>UDP-N-acetyl-alpha-D-muramoyl-L-alanyl-gamma-D-glutamyl-meso-2,6-diaminopimeloyl-D-alanyl-D-alanine + di-trans,octa-cis-undecaprenyl phosphate = di-trans,octa-cis-undecaprenyl diphospho-N-acetyl-alpha-D-muramoyl-L-alanyl-D-glutamyl-meso-2,6-diaminopimeloyl-D-alanyl-D-alanine + UMP</text>
        <dbReference type="Rhea" id="RHEA:28386"/>
        <dbReference type="ChEBI" id="CHEBI:57865"/>
        <dbReference type="ChEBI" id="CHEBI:60392"/>
        <dbReference type="ChEBI" id="CHEBI:61386"/>
        <dbReference type="ChEBI" id="CHEBI:61387"/>
        <dbReference type="EC" id="2.7.8.13"/>
    </reaction>
</comment>
<comment type="cofactor">
    <cofactor evidence="1">
        <name>Mg(2+)</name>
        <dbReference type="ChEBI" id="CHEBI:18420"/>
    </cofactor>
</comment>
<comment type="pathway">
    <text evidence="1">Cell wall biogenesis; peptidoglycan biosynthesis.</text>
</comment>
<comment type="subcellular location">
    <subcellularLocation>
        <location evidence="1">Cell inner membrane</location>
        <topology evidence="1">Multi-pass membrane protein</topology>
    </subcellularLocation>
</comment>
<comment type="similarity">
    <text evidence="1">Belongs to the glycosyltransferase 4 family. MraY subfamily.</text>
</comment>
<gene>
    <name evidence="1" type="primary">mraY</name>
    <name type="ordered locus">PsycPRwf_0137</name>
</gene>
<reference key="1">
    <citation type="submission" date="2007-05" db="EMBL/GenBank/DDBJ databases">
        <title>Complete sequence of chromosome of Psychrobacter sp. PRwf-1.</title>
        <authorList>
            <consortium name="US DOE Joint Genome Institute"/>
            <person name="Copeland A."/>
            <person name="Lucas S."/>
            <person name="Lapidus A."/>
            <person name="Barry K."/>
            <person name="Detter J.C."/>
            <person name="Glavina del Rio T."/>
            <person name="Hammon N."/>
            <person name="Israni S."/>
            <person name="Dalin E."/>
            <person name="Tice H."/>
            <person name="Pitluck S."/>
            <person name="Chain P."/>
            <person name="Malfatti S."/>
            <person name="Shin M."/>
            <person name="Vergez L."/>
            <person name="Schmutz J."/>
            <person name="Larimer F."/>
            <person name="Land M."/>
            <person name="Hauser L."/>
            <person name="Kyrpides N."/>
            <person name="Kim E."/>
            <person name="Tiedje J."/>
            <person name="Richardson P."/>
        </authorList>
    </citation>
    <scope>NUCLEOTIDE SEQUENCE [LARGE SCALE GENOMIC DNA]</scope>
    <source>
        <strain>PRwf-1</strain>
    </source>
</reference>
<keyword id="KW-0131">Cell cycle</keyword>
<keyword id="KW-0132">Cell division</keyword>
<keyword id="KW-0997">Cell inner membrane</keyword>
<keyword id="KW-1003">Cell membrane</keyword>
<keyword id="KW-0133">Cell shape</keyword>
<keyword id="KW-0961">Cell wall biogenesis/degradation</keyword>
<keyword id="KW-0460">Magnesium</keyword>
<keyword id="KW-0472">Membrane</keyword>
<keyword id="KW-0479">Metal-binding</keyword>
<keyword id="KW-0573">Peptidoglycan synthesis</keyword>
<keyword id="KW-0808">Transferase</keyword>
<keyword id="KW-0812">Transmembrane</keyword>
<keyword id="KW-1133">Transmembrane helix</keyword>
<evidence type="ECO:0000255" key="1">
    <source>
        <dbReference type="HAMAP-Rule" id="MF_00038"/>
    </source>
</evidence>